<comment type="function">
    <text evidence="1">Transfers a GMP moiety from GTP to Mo-molybdopterin (Mo-MPT) cofactor (Moco or molybdenum cofactor) to form Mo-molybdopterin guanine dinucleotide (Mo-MGD) cofactor.</text>
</comment>
<comment type="catalytic activity">
    <reaction evidence="1">
        <text>Mo-molybdopterin + GTP + H(+) = Mo-molybdopterin guanine dinucleotide + diphosphate</text>
        <dbReference type="Rhea" id="RHEA:34243"/>
        <dbReference type="ChEBI" id="CHEBI:15378"/>
        <dbReference type="ChEBI" id="CHEBI:33019"/>
        <dbReference type="ChEBI" id="CHEBI:37565"/>
        <dbReference type="ChEBI" id="CHEBI:71302"/>
        <dbReference type="ChEBI" id="CHEBI:71310"/>
        <dbReference type="EC" id="2.7.7.77"/>
    </reaction>
</comment>
<comment type="cofactor">
    <cofactor evidence="1">
        <name>Mg(2+)</name>
        <dbReference type="ChEBI" id="CHEBI:18420"/>
    </cofactor>
</comment>
<comment type="subcellular location">
    <subcellularLocation>
        <location evidence="1">Cytoplasm</location>
    </subcellularLocation>
</comment>
<comment type="domain">
    <text evidence="1">The N-terminal domain determines nucleotide recognition and specific binding, while the C-terminal domain determines the specific binding to the target protein.</text>
</comment>
<comment type="similarity">
    <text evidence="1">Belongs to the MobA family.</text>
</comment>
<proteinExistence type="inferred from homology"/>
<feature type="chain" id="PRO_0000226297" description="Probable molybdenum cofactor guanylyltransferase">
    <location>
        <begin position="1"/>
        <end position="211"/>
    </location>
</feature>
<feature type="binding site" evidence="1">
    <location>
        <begin position="21"/>
        <end position="23"/>
    </location>
    <ligand>
        <name>GTP</name>
        <dbReference type="ChEBI" id="CHEBI:37565"/>
    </ligand>
</feature>
<feature type="binding site" evidence="1">
    <location>
        <position position="33"/>
    </location>
    <ligand>
        <name>GTP</name>
        <dbReference type="ChEBI" id="CHEBI:37565"/>
    </ligand>
</feature>
<feature type="binding site" evidence="1">
    <location>
        <position position="84"/>
    </location>
    <ligand>
        <name>GTP</name>
        <dbReference type="ChEBI" id="CHEBI:37565"/>
    </ligand>
</feature>
<feature type="binding site" evidence="1">
    <location>
        <position position="116"/>
    </location>
    <ligand>
        <name>GTP</name>
        <dbReference type="ChEBI" id="CHEBI:37565"/>
    </ligand>
</feature>
<feature type="binding site" evidence="1">
    <location>
        <position position="116"/>
    </location>
    <ligand>
        <name>Mg(2+)</name>
        <dbReference type="ChEBI" id="CHEBI:18420"/>
    </ligand>
</feature>
<keyword id="KW-0963">Cytoplasm</keyword>
<keyword id="KW-0342">GTP-binding</keyword>
<keyword id="KW-0460">Magnesium</keyword>
<keyword id="KW-0479">Metal-binding</keyword>
<keyword id="KW-0501">Molybdenum cofactor biosynthesis</keyword>
<keyword id="KW-0547">Nucleotide-binding</keyword>
<keyword id="KW-1185">Reference proteome</keyword>
<keyword id="KW-0808">Transferase</keyword>
<organism>
    <name type="scientific">Rhodopirellula baltica (strain DSM 10527 / NCIMB 13988 / SH1)</name>
    <dbReference type="NCBI Taxonomy" id="243090"/>
    <lineage>
        <taxon>Bacteria</taxon>
        <taxon>Pseudomonadati</taxon>
        <taxon>Planctomycetota</taxon>
        <taxon>Planctomycetia</taxon>
        <taxon>Pirellulales</taxon>
        <taxon>Pirellulaceae</taxon>
        <taxon>Rhodopirellula</taxon>
    </lineage>
</organism>
<dbReference type="EC" id="2.7.7.77" evidence="1"/>
<dbReference type="EMBL" id="BX294133">
    <property type="protein sequence ID" value="CAD71494.1"/>
    <property type="molecule type" value="Genomic_DNA"/>
</dbReference>
<dbReference type="RefSeq" id="NP_863821.1">
    <property type="nucleotide sequence ID" value="NC_005027.1"/>
</dbReference>
<dbReference type="SMR" id="Q7UYZ6"/>
<dbReference type="FunCoup" id="Q7UYZ6">
    <property type="interactions" value="51"/>
</dbReference>
<dbReference type="STRING" id="243090.RB293"/>
<dbReference type="EnsemblBacteria" id="CAD71494">
    <property type="protein sequence ID" value="CAD71494"/>
    <property type="gene ID" value="RB293"/>
</dbReference>
<dbReference type="KEGG" id="rba:RB293"/>
<dbReference type="PATRIC" id="fig|243090.15.peg.143"/>
<dbReference type="eggNOG" id="COG0746">
    <property type="taxonomic scope" value="Bacteria"/>
</dbReference>
<dbReference type="HOGENOM" id="CLU_055597_2_2_0"/>
<dbReference type="InParanoid" id="Q7UYZ6"/>
<dbReference type="OrthoDB" id="9788394at2"/>
<dbReference type="Proteomes" id="UP000001025">
    <property type="component" value="Chromosome"/>
</dbReference>
<dbReference type="GO" id="GO:0005737">
    <property type="term" value="C:cytoplasm"/>
    <property type="evidence" value="ECO:0007669"/>
    <property type="project" value="UniProtKB-SubCell"/>
</dbReference>
<dbReference type="GO" id="GO:0005525">
    <property type="term" value="F:GTP binding"/>
    <property type="evidence" value="ECO:0007669"/>
    <property type="project" value="UniProtKB-UniRule"/>
</dbReference>
<dbReference type="GO" id="GO:0046872">
    <property type="term" value="F:metal ion binding"/>
    <property type="evidence" value="ECO:0007669"/>
    <property type="project" value="UniProtKB-KW"/>
</dbReference>
<dbReference type="GO" id="GO:0061603">
    <property type="term" value="F:molybdenum cofactor guanylyltransferase activity"/>
    <property type="evidence" value="ECO:0007669"/>
    <property type="project" value="UniProtKB-EC"/>
</dbReference>
<dbReference type="GO" id="GO:0016779">
    <property type="term" value="F:nucleotidyltransferase activity"/>
    <property type="evidence" value="ECO:0000318"/>
    <property type="project" value="GO_Central"/>
</dbReference>
<dbReference type="GO" id="GO:0006777">
    <property type="term" value="P:Mo-molybdopterin cofactor biosynthetic process"/>
    <property type="evidence" value="ECO:0007669"/>
    <property type="project" value="UniProtKB-KW"/>
</dbReference>
<dbReference type="CDD" id="cd02503">
    <property type="entry name" value="MobA"/>
    <property type="match status" value="1"/>
</dbReference>
<dbReference type="Gene3D" id="3.90.550.10">
    <property type="entry name" value="Spore Coat Polysaccharide Biosynthesis Protein SpsA, Chain A"/>
    <property type="match status" value="1"/>
</dbReference>
<dbReference type="HAMAP" id="MF_00316">
    <property type="entry name" value="MobA"/>
    <property type="match status" value="1"/>
</dbReference>
<dbReference type="InterPro" id="IPR025877">
    <property type="entry name" value="MobA-like_NTP_Trfase"/>
</dbReference>
<dbReference type="InterPro" id="IPR013482">
    <property type="entry name" value="Molybde_CF_guanTrfase"/>
</dbReference>
<dbReference type="InterPro" id="IPR029044">
    <property type="entry name" value="Nucleotide-diphossugar_trans"/>
</dbReference>
<dbReference type="PANTHER" id="PTHR19136">
    <property type="entry name" value="MOLYBDENUM COFACTOR GUANYLYLTRANSFERASE"/>
    <property type="match status" value="1"/>
</dbReference>
<dbReference type="PANTHER" id="PTHR19136:SF81">
    <property type="entry name" value="MOLYBDENUM COFACTOR GUANYLYLTRANSFERASE"/>
    <property type="match status" value="1"/>
</dbReference>
<dbReference type="Pfam" id="PF12804">
    <property type="entry name" value="NTP_transf_3"/>
    <property type="match status" value="1"/>
</dbReference>
<dbReference type="SUPFAM" id="SSF53448">
    <property type="entry name" value="Nucleotide-diphospho-sugar transferases"/>
    <property type="match status" value="1"/>
</dbReference>
<gene>
    <name evidence="1" type="primary">mobA</name>
    <name type="ordered locus">RB293</name>
</gene>
<name>MOBA_RHOBA</name>
<accession>Q7UYZ6</accession>
<evidence type="ECO:0000255" key="1">
    <source>
        <dbReference type="HAMAP-Rule" id="MF_00316"/>
    </source>
</evidence>
<protein>
    <recommendedName>
        <fullName evidence="1">Probable molybdenum cofactor guanylyltransferase</fullName>
        <shortName evidence="1">MoCo guanylyltransferase</shortName>
        <ecNumber evidence="1">2.7.7.77</ecNumber>
    </recommendedName>
    <alternativeName>
        <fullName evidence="1">GTP:molybdopterin guanylyltransferase</fullName>
    </alternativeName>
    <alternativeName>
        <fullName evidence="1">Mo-MPT guanylyltransferase</fullName>
    </alternativeName>
    <alternativeName>
        <fullName evidence="1">Molybdopterin guanylyltransferase</fullName>
    </alternativeName>
    <alternativeName>
        <fullName evidence="1">Molybdopterin-guanine dinucleotide synthase</fullName>
        <shortName evidence="1">MGD synthase</shortName>
    </alternativeName>
</protein>
<sequence>MRNELTAMPHAAPPPLLGVLLAGGRSSRMGTPKALLPHPSGGTFLTHSLDRLRLVCEEKIVVSLASEAHRAQVQLPPSVPALFDSQPALGPAMGVSVALQHASSNGFAGCLFTPVDLPDLSVDDLLSLVHAWRESPTQIVLAQQTDPERLQPLVGIYPVACMDSIQRVVESEHRSLYRSLRSSDHQTVAIPSTRLRNVNTPADLGPPFDST</sequence>
<reference key="1">
    <citation type="journal article" date="2003" name="Proc. Natl. Acad. Sci. U.S.A.">
        <title>Complete genome sequence of the marine planctomycete Pirellula sp. strain 1.</title>
        <authorList>
            <person name="Gloeckner F.O."/>
            <person name="Kube M."/>
            <person name="Bauer M."/>
            <person name="Teeling H."/>
            <person name="Lombardot T."/>
            <person name="Ludwig W."/>
            <person name="Gade D."/>
            <person name="Beck A."/>
            <person name="Borzym K."/>
            <person name="Heitmann K."/>
            <person name="Rabus R."/>
            <person name="Schlesner H."/>
            <person name="Amann R."/>
            <person name="Reinhardt R."/>
        </authorList>
    </citation>
    <scope>NUCLEOTIDE SEQUENCE [LARGE SCALE GENOMIC DNA]</scope>
    <source>
        <strain>DSM 10527 / NCIMB 13988 / SH1</strain>
    </source>
</reference>